<comment type="function">
    <text evidence="1">This protein is one of the early assembly proteins of the 50S ribosomal subunit, although it is not seen to bind rRNA by itself. It is important during the early stages of 50S assembly.</text>
</comment>
<comment type="subunit">
    <text evidence="1">Part of the 50S ribosomal subunit.</text>
</comment>
<comment type="similarity">
    <text evidence="1">Belongs to the universal ribosomal protein uL13 family.</text>
</comment>
<name>RL13_STAAR</name>
<keyword id="KW-0687">Ribonucleoprotein</keyword>
<keyword id="KW-0689">Ribosomal protein</keyword>
<evidence type="ECO:0000255" key="1">
    <source>
        <dbReference type="HAMAP-Rule" id="MF_01366"/>
    </source>
</evidence>
<evidence type="ECO:0000305" key="2"/>
<feature type="chain" id="PRO_0000223977" description="Large ribosomal subunit protein uL13">
    <location>
        <begin position="1"/>
        <end position="145"/>
    </location>
</feature>
<protein>
    <recommendedName>
        <fullName evidence="1">Large ribosomal subunit protein uL13</fullName>
    </recommendedName>
    <alternativeName>
        <fullName evidence="2">50S ribosomal protein L13</fullName>
    </alternativeName>
</protein>
<accession>Q6GEL7</accession>
<gene>
    <name evidence="1" type="primary">rplM</name>
    <name type="ordered locus">SAR2301</name>
</gene>
<proteinExistence type="inferred from homology"/>
<dbReference type="EMBL" id="BX571856">
    <property type="protein sequence ID" value="CAG41282.1"/>
    <property type="molecule type" value="Genomic_DNA"/>
</dbReference>
<dbReference type="RefSeq" id="WP_001250038.1">
    <property type="nucleotide sequence ID" value="NC_002952.2"/>
</dbReference>
<dbReference type="SMR" id="Q6GEL7"/>
<dbReference type="GeneID" id="98346530"/>
<dbReference type="KEGG" id="sar:SAR2301"/>
<dbReference type="HOGENOM" id="CLU_082184_2_2_9"/>
<dbReference type="Proteomes" id="UP000000596">
    <property type="component" value="Chromosome"/>
</dbReference>
<dbReference type="GO" id="GO:0022625">
    <property type="term" value="C:cytosolic large ribosomal subunit"/>
    <property type="evidence" value="ECO:0007669"/>
    <property type="project" value="TreeGrafter"/>
</dbReference>
<dbReference type="GO" id="GO:0003729">
    <property type="term" value="F:mRNA binding"/>
    <property type="evidence" value="ECO:0007669"/>
    <property type="project" value="TreeGrafter"/>
</dbReference>
<dbReference type="GO" id="GO:0003735">
    <property type="term" value="F:structural constituent of ribosome"/>
    <property type="evidence" value="ECO:0007669"/>
    <property type="project" value="InterPro"/>
</dbReference>
<dbReference type="GO" id="GO:0017148">
    <property type="term" value="P:negative regulation of translation"/>
    <property type="evidence" value="ECO:0007669"/>
    <property type="project" value="TreeGrafter"/>
</dbReference>
<dbReference type="GO" id="GO:0006412">
    <property type="term" value="P:translation"/>
    <property type="evidence" value="ECO:0007669"/>
    <property type="project" value="UniProtKB-UniRule"/>
</dbReference>
<dbReference type="CDD" id="cd00392">
    <property type="entry name" value="Ribosomal_L13"/>
    <property type="match status" value="1"/>
</dbReference>
<dbReference type="FunFam" id="3.90.1180.10:FF:000001">
    <property type="entry name" value="50S ribosomal protein L13"/>
    <property type="match status" value="1"/>
</dbReference>
<dbReference type="Gene3D" id="3.90.1180.10">
    <property type="entry name" value="Ribosomal protein L13"/>
    <property type="match status" value="1"/>
</dbReference>
<dbReference type="HAMAP" id="MF_01366">
    <property type="entry name" value="Ribosomal_uL13"/>
    <property type="match status" value="1"/>
</dbReference>
<dbReference type="InterPro" id="IPR005822">
    <property type="entry name" value="Ribosomal_uL13"/>
</dbReference>
<dbReference type="InterPro" id="IPR005823">
    <property type="entry name" value="Ribosomal_uL13_bac-type"/>
</dbReference>
<dbReference type="InterPro" id="IPR023563">
    <property type="entry name" value="Ribosomal_uL13_CS"/>
</dbReference>
<dbReference type="InterPro" id="IPR036899">
    <property type="entry name" value="Ribosomal_uL13_sf"/>
</dbReference>
<dbReference type="NCBIfam" id="TIGR01066">
    <property type="entry name" value="rplM_bact"/>
    <property type="match status" value="1"/>
</dbReference>
<dbReference type="PANTHER" id="PTHR11545:SF2">
    <property type="entry name" value="LARGE RIBOSOMAL SUBUNIT PROTEIN UL13M"/>
    <property type="match status" value="1"/>
</dbReference>
<dbReference type="PANTHER" id="PTHR11545">
    <property type="entry name" value="RIBOSOMAL PROTEIN L13"/>
    <property type="match status" value="1"/>
</dbReference>
<dbReference type="Pfam" id="PF00572">
    <property type="entry name" value="Ribosomal_L13"/>
    <property type="match status" value="1"/>
</dbReference>
<dbReference type="PIRSF" id="PIRSF002181">
    <property type="entry name" value="Ribosomal_L13"/>
    <property type="match status" value="1"/>
</dbReference>
<dbReference type="SUPFAM" id="SSF52161">
    <property type="entry name" value="Ribosomal protein L13"/>
    <property type="match status" value="1"/>
</dbReference>
<dbReference type="PROSITE" id="PS00783">
    <property type="entry name" value="RIBOSOMAL_L13"/>
    <property type="match status" value="1"/>
</dbReference>
<sequence length="145" mass="16333">MRQTFMANESNIERKWYVIDAEGQTLGRLSSEVASILRGKNKVTYTPHVDTGDYVIVINASKIEFTGNKETDKVYYRHSNHPGGIKSITAGELRRTNPERLIENSIKGMLPSTRLGEKQGKKLFVYGGAEHPHAAQQPENYELRG</sequence>
<organism>
    <name type="scientific">Staphylococcus aureus (strain MRSA252)</name>
    <dbReference type="NCBI Taxonomy" id="282458"/>
    <lineage>
        <taxon>Bacteria</taxon>
        <taxon>Bacillati</taxon>
        <taxon>Bacillota</taxon>
        <taxon>Bacilli</taxon>
        <taxon>Bacillales</taxon>
        <taxon>Staphylococcaceae</taxon>
        <taxon>Staphylococcus</taxon>
    </lineage>
</organism>
<reference key="1">
    <citation type="journal article" date="2004" name="Proc. Natl. Acad. Sci. U.S.A.">
        <title>Complete genomes of two clinical Staphylococcus aureus strains: evidence for the rapid evolution of virulence and drug resistance.</title>
        <authorList>
            <person name="Holden M.T.G."/>
            <person name="Feil E.J."/>
            <person name="Lindsay J.A."/>
            <person name="Peacock S.J."/>
            <person name="Day N.P.J."/>
            <person name="Enright M.C."/>
            <person name="Foster T.J."/>
            <person name="Moore C.E."/>
            <person name="Hurst L."/>
            <person name="Atkin R."/>
            <person name="Barron A."/>
            <person name="Bason N."/>
            <person name="Bentley S.D."/>
            <person name="Chillingworth C."/>
            <person name="Chillingworth T."/>
            <person name="Churcher C."/>
            <person name="Clark L."/>
            <person name="Corton C."/>
            <person name="Cronin A."/>
            <person name="Doggett J."/>
            <person name="Dowd L."/>
            <person name="Feltwell T."/>
            <person name="Hance Z."/>
            <person name="Harris B."/>
            <person name="Hauser H."/>
            <person name="Holroyd S."/>
            <person name="Jagels K."/>
            <person name="James K.D."/>
            <person name="Lennard N."/>
            <person name="Line A."/>
            <person name="Mayes R."/>
            <person name="Moule S."/>
            <person name="Mungall K."/>
            <person name="Ormond D."/>
            <person name="Quail M.A."/>
            <person name="Rabbinowitsch E."/>
            <person name="Rutherford K.M."/>
            <person name="Sanders M."/>
            <person name="Sharp S."/>
            <person name="Simmonds M."/>
            <person name="Stevens K."/>
            <person name="Whitehead S."/>
            <person name="Barrell B.G."/>
            <person name="Spratt B.G."/>
            <person name="Parkhill J."/>
        </authorList>
    </citation>
    <scope>NUCLEOTIDE SEQUENCE [LARGE SCALE GENOMIC DNA]</scope>
    <source>
        <strain>MRSA252</strain>
    </source>
</reference>